<proteinExistence type="inferred from homology"/>
<name>NUOH2_GEOMG</name>
<dbReference type="EC" id="7.1.1.-" evidence="1"/>
<dbReference type="EMBL" id="CP000148">
    <property type="protein sequence ID" value="ABB33560.2"/>
    <property type="molecule type" value="Genomic_DNA"/>
</dbReference>
<dbReference type="SMR" id="Q39QB4"/>
<dbReference type="STRING" id="269799.Gmet_3348"/>
<dbReference type="KEGG" id="gme:Gmet_3348"/>
<dbReference type="eggNOG" id="COG1005">
    <property type="taxonomic scope" value="Bacteria"/>
</dbReference>
<dbReference type="HOGENOM" id="CLU_015134_0_1_7"/>
<dbReference type="Proteomes" id="UP000007073">
    <property type="component" value="Chromosome"/>
</dbReference>
<dbReference type="GO" id="GO:0005886">
    <property type="term" value="C:plasma membrane"/>
    <property type="evidence" value="ECO:0007669"/>
    <property type="project" value="UniProtKB-SubCell"/>
</dbReference>
<dbReference type="GO" id="GO:0003954">
    <property type="term" value="F:NADH dehydrogenase activity"/>
    <property type="evidence" value="ECO:0007669"/>
    <property type="project" value="TreeGrafter"/>
</dbReference>
<dbReference type="GO" id="GO:0016655">
    <property type="term" value="F:oxidoreductase activity, acting on NAD(P)H, quinone or similar compound as acceptor"/>
    <property type="evidence" value="ECO:0007669"/>
    <property type="project" value="UniProtKB-UniRule"/>
</dbReference>
<dbReference type="GO" id="GO:0048038">
    <property type="term" value="F:quinone binding"/>
    <property type="evidence" value="ECO:0007669"/>
    <property type="project" value="UniProtKB-KW"/>
</dbReference>
<dbReference type="GO" id="GO:0009060">
    <property type="term" value="P:aerobic respiration"/>
    <property type="evidence" value="ECO:0007669"/>
    <property type="project" value="TreeGrafter"/>
</dbReference>
<dbReference type="HAMAP" id="MF_01350">
    <property type="entry name" value="NDH1_NuoH"/>
    <property type="match status" value="1"/>
</dbReference>
<dbReference type="InterPro" id="IPR001694">
    <property type="entry name" value="NADH_UbQ_OxRdtase_su1/FPO"/>
</dbReference>
<dbReference type="InterPro" id="IPR018086">
    <property type="entry name" value="NADH_UbQ_OxRdtase_su1_CS"/>
</dbReference>
<dbReference type="NCBIfam" id="NF004741">
    <property type="entry name" value="PRK06076.1-2"/>
    <property type="match status" value="1"/>
</dbReference>
<dbReference type="PANTHER" id="PTHR11432">
    <property type="entry name" value="NADH DEHYDROGENASE SUBUNIT 1"/>
    <property type="match status" value="1"/>
</dbReference>
<dbReference type="PANTHER" id="PTHR11432:SF3">
    <property type="entry name" value="NADH-UBIQUINONE OXIDOREDUCTASE CHAIN 1"/>
    <property type="match status" value="1"/>
</dbReference>
<dbReference type="Pfam" id="PF00146">
    <property type="entry name" value="NADHdh"/>
    <property type="match status" value="1"/>
</dbReference>
<dbReference type="PROSITE" id="PS00667">
    <property type="entry name" value="COMPLEX1_ND1_1"/>
    <property type="match status" value="1"/>
</dbReference>
<dbReference type="PROSITE" id="PS00668">
    <property type="entry name" value="COMPLEX1_ND1_2"/>
    <property type="match status" value="1"/>
</dbReference>
<protein>
    <recommendedName>
        <fullName evidence="1">NADH-quinone oxidoreductase subunit H 2</fullName>
        <ecNumber evidence="1">7.1.1.-</ecNumber>
    </recommendedName>
    <alternativeName>
        <fullName evidence="1">NADH dehydrogenase I subunit H 2</fullName>
    </alternativeName>
    <alternativeName>
        <fullName evidence="1">NDH-1 subunit H 2</fullName>
    </alternativeName>
</protein>
<evidence type="ECO:0000255" key="1">
    <source>
        <dbReference type="HAMAP-Rule" id="MF_01350"/>
    </source>
</evidence>
<keyword id="KW-0997">Cell inner membrane</keyword>
<keyword id="KW-1003">Cell membrane</keyword>
<keyword id="KW-0472">Membrane</keyword>
<keyword id="KW-0520">NAD</keyword>
<keyword id="KW-0874">Quinone</keyword>
<keyword id="KW-1185">Reference proteome</keyword>
<keyword id="KW-1278">Translocase</keyword>
<keyword id="KW-0812">Transmembrane</keyword>
<keyword id="KW-1133">Transmembrane helix</keyword>
<keyword id="KW-0830">Ubiquinone</keyword>
<organism>
    <name type="scientific">Geobacter metallireducens (strain ATCC 53774 / DSM 7210 / GS-15)</name>
    <dbReference type="NCBI Taxonomy" id="269799"/>
    <lineage>
        <taxon>Bacteria</taxon>
        <taxon>Pseudomonadati</taxon>
        <taxon>Thermodesulfobacteriota</taxon>
        <taxon>Desulfuromonadia</taxon>
        <taxon>Geobacterales</taxon>
        <taxon>Geobacteraceae</taxon>
        <taxon>Geobacter</taxon>
    </lineage>
</organism>
<sequence>MGYEILGLPMAYYIAMVLKVLVVFVFVLLTVAYATYAERKIIGHMQVRLGPMRTGWHGLLQPIADGVKLFFKEEIIPSKADKFAFLIAPLIALVPAFIGFAVIPFGETIEVGGYKIPLQIAAYYDTASGQVVDLNVGVLYILALASIGVYGIVLAGWSSNSKYSLLGGLRSSAQMISYELAAGLAIISVFMLSESLSLQKIVADQANGAWYAFKQPLAFILFFICSIAEINRTPFDLPEAETELVSGFCTEYSSMKYAMFFMAEYANMVTVCAVTTTLFLGGWHGPSFLPGWFWFIAKVYFLIFTCMWIRATYPRYRYDQLMRLGWKVFLPLTLINIVVTGIIVSL</sequence>
<feature type="chain" id="PRO_0000240075" description="NADH-quinone oxidoreductase subunit H 2">
    <location>
        <begin position="1"/>
        <end position="346"/>
    </location>
</feature>
<feature type="transmembrane region" description="Helical" evidence="1">
    <location>
        <begin position="14"/>
        <end position="34"/>
    </location>
</feature>
<feature type="transmembrane region" description="Helical" evidence="1">
    <location>
        <begin position="83"/>
        <end position="103"/>
    </location>
</feature>
<feature type="transmembrane region" description="Helical" evidence="1">
    <location>
        <begin position="136"/>
        <end position="156"/>
    </location>
</feature>
<feature type="transmembrane region" description="Helical" evidence="1">
    <location>
        <begin position="172"/>
        <end position="192"/>
    </location>
</feature>
<feature type="transmembrane region" description="Helical" evidence="1">
    <location>
        <begin position="208"/>
        <end position="228"/>
    </location>
</feature>
<feature type="transmembrane region" description="Helical" evidence="1">
    <location>
        <begin position="260"/>
        <end position="280"/>
    </location>
</feature>
<feature type="transmembrane region" description="Helical" evidence="1">
    <location>
        <begin position="289"/>
        <end position="309"/>
    </location>
</feature>
<feature type="transmembrane region" description="Helical" evidence="1">
    <location>
        <begin position="324"/>
        <end position="344"/>
    </location>
</feature>
<accession>Q39QB4</accession>
<reference key="1">
    <citation type="journal article" date="2009" name="BMC Microbiol.">
        <title>The genome sequence of Geobacter metallireducens: features of metabolism, physiology and regulation common and dissimilar to Geobacter sulfurreducens.</title>
        <authorList>
            <person name="Aklujkar M."/>
            <person name="Krushkal J."/>
            <person name="DiBartolo G."/>
            <person name="Lapidus A."/>
            <person name="Land M.L."/>
            <person name="Lovley D.R."/>
        </authorList>
    </citation>
    <scope>NUCLEOTIDE SEQUENCE [LARGE SCALE GENOMIC DNA]</scope>
    <source>
        <strain>ATCC 53774 / DSM 7210 / GS-15</strain>
    </source>
</reference>
<gene>
    <name evidence="1" type="primary">nuoH2</name>
    <name type="ordered locus">Gmet_3348</name>
</gene>
<comment type="function">
    <text evidence="1">NDH-1 shuttles electrons from NADH, via FMN and iron-sulfur (Fe-S) centers, to quinones in the respiratory chain. The immediate electron acceptor for the enzyme in this species is believed to be ubiquinone. Couples the redox reaction to proton translocation (for every two electrons transferred, four hydrogen ions are translocated across the cytoplasmic membrane), and thus conserves the redox energy in a proton gradient. This subunit may bind ubiquinone.</text>
</comment>
<comment type="catalytic activity">
    <reaction evidence="1">
        <text>a quinone + NADH + 5 H(+)(in) = a quinol + NAD(+) + 4 H(+)(out)</text>
        <dbReference type="Rhea" id="RHEA:57888"/>
        <dbReference type="ChEBI" id="CHEBI:15378"/>
        <dbReference type="ChEBI" id="CHEBI:24646"/>
        <dbReference type="ChEBI" id="CHEBI:57540"/>
        <dbReference type="ChEBI" id="CHEBI:57945"/>
        <dbReference type="ChEBI" id="CHEBI:132124"/>
    </reaction>
</comment>
<comment type="subunit">
    <text evidence="1">NDH-1 is composed of 14 different subunits. Subunits NuoA, H, J, K, L, M, N constitute the membrane sector of the complex.</text>
</comment>
<comment type="subcellular location">
    <subcellularLocation>
        <location evidence="1">Cell inner membrane</location>
        <topology evidence="1">Multi-pass membrane protein</topology>
    </subcellularLocation>
</comment>
<comment type="similarity">
    <text evidence="1">Belongs to the complex I subunit 1 family.</text>
</comment>